<evidence type="ECO:0000255" key="1"/>
<evidence type="ECO:0000255" key="2">
    <source>
        <dbReference type="PROSITE-ProRule" id="PRU00279"/>
    </source>
</evidence>
<evidence type="ECO:0000255" key="3">
    <source>
        <dbReference type="PROSITE-ProRule" id="PRU00498"/>
    </source>
</evidence>
<evidence type="ECO:0000255" key="4">
    <source>
        <dbReference type="PROSITE-ProRule" id="PRU00782"/>
    </source>
</evidence>
<evidence type="ECO:0000255" key="5">
    <source>
        <dbReference type="PROSITE-ProRule" id="PRU01342"/>
    </source>
</evidence>
<evidence type="ECO:0000256" key="6">
    <source>
        <dbReference type="SAM" id="MobiDB-lite"/>
    </source>
</evidence>
<evidence type="ECO:0000269" key="7">
    <source>
    </source>
</evidence>
<evidence type="ECO:0000269" key="8">
    <source>
    </source>
</evidence>
<evidence type="ECO:0000269" key="9">
    <source>
    </source>
</evidence>
<evidence type="ECO:0000269" key="10">
    <source>
    </source>
</evidence>
<evidence type="ECO:0000269" key="11">
    <source>
    </source>
</evidence>
<evidence type="ECO:0000303" key="12">
    <source>
    </source>
</evidence>
<evidence type="ECO:0000305" key="13"/>
<feature type="chain" id="PRO_0000460790" description="Chitin synthase 5">
    <location>
        <begin position="1"/>
        <end position="1885"/>
    </location>
</feature>
<feature type="transmembrane region" description="Helical" evidence="1">
    <location>
        <begin position="894"/>
        <end position="914"/>
    </location>
</feature>
<feature type="transmembrane region" description="Helical" evidence="1">
    <location>
        <begin position="929"/>
        <end position="949"/>
    </location>
</feature>
<feature type="transmembrane region" description="Helical" evidence="1">
    <location>
        <begin position="1205"/>
        <end position="1225"/>
    </location>
</feature>
<feature type="transmembrane region" description="Helical" evidence="1">
    <location>
        <begin position="1599"/>
        <end position="1619"/>
    </location>
</feature>
<feature type="transmembrane region" description="Helical" evidence="1">
    <location>
        <begin position="1626"/>
        <end position="1646"/>
    </location>
</feature>
<feature type="transmembrane region" description="Helical" evidence="1">
    <location>
        <begin position="1653"/>
        <end position="1673"/>
    </location>
</feature>
<feature type="domain" description="Myosin motor" evidence="4">
    <location>
        <begin position="1"/>
        <end position="789"/>
    </location>
</feature>
<feature type="domain" description="Cytochrome b5 heme-binding" evidence="2">
    <location>
        <begin position="957"/>
        <end position="1016"/>
    </location>
</feature>
<feature type="domain" description="DEK-C" evidence="5">
    <location>
        <begin position="1827"/>
        <end position="1882"/>
    </location>
</feature>
<feature type="region of interest" description="Disordered" evidence="6">
    <location>
        <begin position="601"/>
        <end position="649"/>
    </location>
</feature>
<feature type="region of interest" description="Actin-binding" evidence="4">
    <location>
        <begin position="666"/>
        <end position="690"/>
    </location>
</feature>
<feature type="region of interest" description="Disordered" evidence="6">
    <location>
        <begin position="794"/>
        <end position="817"/>
    </location>
</feature>
<feature type="compositionally biased region" description="Basic residues" evidence="6">
    <location>
        <begin position="609"/>
        <end position="621"/>
    </location>
</feature>
<feature type="binding site" evidence="4">
    <location>
        <begin position="99"/>
        <end position="106"/>
    </location>
    <ligand>
        <name>ATP</name>
        <dbReference type="ChEBI" id="CHEBI:30616"/>
    </ligand>
</feature>
<feature type="glycosylation site" description="N-linked (GlcNAc...) asparagine" evidence="3">
    <location>
        <position position="219"/>
    </location>
</feature>
<feature type="glycosylation site" description="N-linked (GlcNAc...) asparagine" evidence="3">
    <location>
        <position position="429"/>
    </location>
</feature>
<feature type="glycosylation site" description="N-linked (GlcNAc...) asparagine" evidence="3">
    <location>
        <position position="668"/>
    </location>
</feature>
<feature type="glycosylation site" description="N-linked (GlcNAc...) asparagine" evidence="3">
    <location>
        <position position="1043"/>
    </location>
</feature>
<feature type="glycosylation site" description="N-linked (GlcNAc...) asparagine" evidence="3">
    <location>
        <position position="1068"/>
    </location>
</feature>
<feature type="glycosylation site" description="N-linked (GlcNAc...) asparagine" evidence="3">
    <location>
        <position position="1462"/>
    </location>
</feature>
<feature type="glycosylation site" description="N-linked (GlcNAc...) asparagine" evidence="3">
    <location>
        <position position="1568"/>
    </location>
</feature>
<feature type="glycosylation site" description="N-linked (GlcNAc...) asparagine" evidence="3">
    <location>
        <position position="1759"/>
    </location>
</feature>
<feature type="glycosylation site" description="N-linked (GlcNAc...) asparagine" evidence="3">
    <location>
        <position position="1790"/>
    </location>
</feature>
<gene>
    <name evidence="12" type="primary">CHS5</name>
</gene>
<reference key="1">
    <citation type="journal article" date="2004" name="Eukaryot. Cell">
        <title>Wangiella (Exophiala) dermatitidis WdChs5p, a class V chitin synthase, is essential for sustained cell growth at temperature of infection.</title>
        <authorList>
            <person name="Liu H."/>
            <person name="Kauffman S."/>
            <person name="Becker J.M."/>
            <person name="Szaniszlo P.J."/>
        </authorList>
    </citation>
    <scope>NUCLEOTIDE SEQUENCE [GENOMIC DNA]</scope>
    <scope>INDUCTION</scope>
    <scope>FUNCTION</scope>
    <scope>DISRUPTION PHENOTYPE</scope>
    <source>
        <strain>8656</strain>
    </source>
</reference>
<reference key="2">
    <citation type="journal article" date="2002" name="Microbiology">
        <title>Compensatory expression of five chitin synthase genes, a response to stress stimuli, in Wangiella (Exophiala) dermatitidis, a melanized fungal pathogen of humans.</title>
        <authorList>
            <person name="Wang Q."/>
            <person name="Liu H."/>
            <person name="Szaniszlo P.J."/>
        </authorList>
    </citation>
    <scope>INDUCTION</scope>
    <scope>DISRUPTION PHENOTYPE</scope>
</reference>
<reference key="3">
    <citation type="journal article" date="2007" name="FEMS Microbiol. Lett.">
        <title>Transcription and expression analyses of WdCHS5, which encodes a class V chitin synthase with a myosin motor-like domain in Wangiella (Exophiala) dermatitidis.</title>
        <authorList>
            <person name="Liu H."/>
            <person name="Szaniszlo P.J."/>
        </authorList>
    </citation>
    <scope>INDUCTION</scope>
</reference>
<reference key="4">
    <citation type="journal article" date="2009" name="Prep. Biochem. Biotechnol.">
        <title>Immunoaffinity purification of the class V chitin synthase of Wangiella (Exophiala) dermatitidis.</title>
        <authorList>
            <person name="Abramczyk D."/>
            <person name="Szaniszlo P.J."/>
        </authorList>
    </citation>
    <scope>SUBCELLULAR LOCATION</scope>
    <scope>CATALYTIC ACTIVITY</scope>
    <scope>ZYMOGEN</scope>
</reference>
<reference key="5">
    <citation type="journal article" date="2009" name="Fungal Genet. Biol.">
        <title>Cytolocalization of the class V chitin synthase in the yeast, hyphal and sclerotic morphotypes of Wangiella (Exophiala) dermatitidis.</title>
        <authorList>
            <person name="Abramczyk D."/>
            <person name="Park C."/>
            <person name="Szaniszlo P.J."/>
        </authorList>
    </citation>
    <scope>FUNCTION</scope>
    <scope>SUBCELLULAR LOCATION</scope>
    <scope>DOMAIN</scope>
</reference>
<keyword id="KW-0009">Actin-binding</keyword>
<keyword id="KW-0067">ATP-binding</keyword>
<keyword id="KW-1003">Cell membrane</keyword>
<keyword id="KW-0325">Glycoprotein</keyword>
<keyword id="KW-0328">Glycosyltransferase</keyword>
<keyword id="KW-0472">Membrane</keyword>
<keyword id="KW-0505">Motor protein</keyword>
<keyword id="KW-0518">Myosin</keyword>
<keyword id="KW-0547">Nucleotide-binding</keyword>
<keyword id="KW-0808">Transferase</keyword>
<keyword id="KW-0812">Transmembrane</keyword>
<keyword id="KW-1133">Transmembrane helix</keyword>
<keyword id="KW-0843">Virulence</keyword>
<keyword id="KW-0865">Zymogen</keyword>
<name>CHS5_EXODE</name>
<accession>Q8TGV2</accession>
<sequence length="1885" mass="208884">MATRGNVPAHMQASLPALPAHLQSDTHITAHLASRFHVSLPTARLSSQGLICLNTFTSSTRGPNGDKEGSAMGEPEDLARRAWARLGNRAEDQAFGFFGESGSGKTTVRSHLLSSFLSFSSTPLSSKLSLAAFVFDTLTTTKTTTTQTASKAGLFYELQYDASSNNPTLIGGKLLDHRFERSRISHVPTGERSFHVLYYLLAGTSAAEKSHLGLDGHVNITTAGTGLSRSASVSHKRWRYLGHPTQMKVGINDAEGFQHFKNALRKLEFPRTEIAEICQVLAAILHIGQLEFGTGQATLTAAEESGGYSHEGGETVTVVKNRDTLAIVAAFLGLGVQDLEESLRYKTRTIHRERVTVMLDTKGARENADELATTLYSLLVTYIIESINQRVCAAEDSVANTISIVDFPGFADHSSTGSVLDQLLNNAANESLYNTCLHSIFEKTAEMLESEEVSVPATSYFDNSDAVRGLLKHGNGLLAILDDQTRRGRTDVQFLESLRKRFENKNKAITVGSATSTMPGSNFATTNLAASFTVRHYAGEVDYPVHSLVEENGDVVSGDLMNMIKATKSDFVANLFGQEALNTVSHPAEKTAIVQAQVSSKPLRMPSVSRKKHDQLRRMASRRADRSPAPQEEEPLPGTEEAKVRRTKPTATGLTQGAAAQFLSALDNITKSLTAPNVNNYFVFCLKPNDRRIANQFDSKCVRQQVQMFGIAEISQRLRTADFTIFLPFGEFLGLTNADGGVVGSDREKAQLVLDSKHWPPNEARIGNTGVFLSERCWASIALTGSQAAAYFGGDIGSPSRPDTPGHNPFSDSKARLVGSADGTPGSFYGDEAKGGGYFGSRELDAKSDAGASAFHSGDMFRNLETKEELAEKGNKKKVEEVDVVPVSSSRKRWLAIVYFLTWYLPDFAIKWIGGMKRKDVRTAWREKFAINLLIWLSCGLVVFFIIVFPELICPKQNVYSAAELSAHDGKGKHSAYVAIRGQVFDLGAFMPNHYPKIIPQSSLKKYAGVDATGLFPVQVSALCQGKDGRVDPTVQLDYTATNISGTAAVISSTDANRKYHDFRYFTNDSRPDWFYEQMIMLKANYRKGSIGYTPQYVKTLAKKSKSIAILNDRVYDFTTYNEGGRSVRAPPGEEVPSGVDTDFMDSLVVDLFTQRAGHDVTKYWNALPLDPGLRSRMQLCLDNLFFVGVTDTRNSPRCLFARYILLAVSILLCSVIGFKFFAALQFGGKNVPENLDKFVICQVPAYTEDEDSLRRAIDSAARMRYDDKRKLLIVVCDGMIIGQGNDRPTPRIVLDILGVSETVDPEPLSFESLGEGMKQHNMGKVYSGLYEVQGHIVPFMVVVKVGKPSEVSRPGNRGKRDSQMVIMRFLHRVHYNLPMSPLELEMHHQIRNIIGVNPTFYEFMLQIDADTVVAPDSATRMVSAFLRDTRLIGVCGETSLSNAKSSFITMMQVYEYYISHNLTKAFESLFGSVTCVPGCFTMYRIRAAETGKPLFVSKEIIQDYSEIRVDTLHMKNLLHLGEDRYLTTLLLKYHSKYKTKYIFHAHAWTIAPDSWKVFMSQRRRWINSTVHNLIELIPLQQLCGFCCFSMRFVVFLDLLSTVVAPVTVAYIAYLIVLLATESDVVPLTAFILLGAIYGLQAIIFILRRKWEMIGWMIVYILAMPVFSLGLPLYAFWHMDDFSWGNTRLVRGEHGKQILLSDEGKFGPDSIPKKKWEEYQAELWDAQTQRDDARSELSGYSYGTKSYLPTGSVYGGGYNDTQHLMMAPSRSASQLDMHPTPMYGGGGGHNQSRMSLAPSEMLGSQSNLMMPSGRSVADMEMSDLTGLPTDDMLLNEIRDILRTADLMTVTKKGIKQELERRFNVNLDMKRAYIGSATEAILSGQL</sequence>
<proteinExistence type="evidence at protein level"/>
<comment type="function">
    <text evidence="8 10 11">Polymerizes chitin, a structural polymer of the cell wall and septum, by transferring the sugar moiety of UDP-GlcNAc to the non-reducing end of the growing chitin polymer (PubMed:19431044). CHS5 is required for the sustained growth at 37 degrees Celsius and is of critical importance for virulence (PubMed:14871935, PubMed:18992354). Especially important at infection temperatures for maintaining the cell wall integrity of developing yeast buds, elongating tips of hyphae, and random sites of expansion in sclerotic forms (PubMed:18992354).</text>
</comment>
<comment type="catalytic activity">
    <reaction evidence="10 11">
        <text>[(1-&gt;4)-N-acetyl-beta-D-glucosaminyl](n) + UDP-N-acetyl-alpha-D-glucosamine = [(1-&gt;4)-N-acetyl-beta-D-glucosaminyl](n+1) + UDP + H(+)</text>
        <dbReference type="Rhea" id="RHEA:16637"/>
        <dbReference type="Rhea" id="RHEA-COMP:9593"/>
        <dbReference type="Rhea" id="RHEA-COMP:9595"/>
        <dbReference type="ChEBI" id="CHEBI:15378"/>
        <dbReference type="ChEBI" id="CHEBI:17029"/>
        <dbReference type="ChEBI" id="CHEBI:57705"/>
        <dbReference type="ChEBI" id="CHEBI:58223"/>
        <dbReference type="EC" id="2.4.1.16"/>
    </reaction>
    <physiologicalReaction direction="left-to-right" evidence="10 11">
        <dbReference type="Rhea" id="RHEA:16638"/>
    </physiologicalReaction>
</comment>
<comment type="subcellular location">
    <subcellularLocation>
        <location evidence="10 11">Cell membrane</location>
        <topology>Multi-pass membrane protein</topology>
    </subcellularLocation>
    <subcellularLocation>
        <location evidence="1">Membrane</location>
    </subcellularLocation>
    <text evidence="10">Localizes to the regions of cell wall growth in an actin-dependent fashion.</text>
</comment>
<comment type="induction">
    <text evidence="7 8 9">The expression level increases quickly and almost doubles when cells were shifted to 37 degrees Celsius, compared to cells maintained at 25 degrees Celsius (PubMed:12213927, PubMed:14871935, PubMed:17937668). Expression is also increased under additional stress conditions that are known to initiate development of the sclerotic morphology (acidic conditions or Ca(2+) limitation induced by EGTA) or of hyphae (induced by nitrogen limitation) (PubMed:14871935). At least one negative regulator binding sequence exists in the promoter between -880 and -680 bp and another regulatory binding site is localized between bp -680 and -450 bp (PubMed:14871935).</text>
</comment>
<comment type="domain">
    <text evidence="10">Contains an N-terminal myosin motor-like domain with a P-loop (MMD) that is involved in the actin-dependent localization to the regions of cell wall growth.</text>
</comment>
<comment type="PTM">
    <text evidence="11">Maximal activity requires trypsin activation, suggesting a zymogenic nature.</text>
</comment>
<comment type="disruption phenotype">
    <text evidence="7 8">Leads to hyperpigmentation and loss of viability in stationary phase at 37 degrees Celsius (PubMed:14871935). Reduces the virulence in a mouse model of acute infection (PubMed:14871935). Causes cell wall integrity defects and subsequent abnormal yeast morphology at 37 degrees Celsius (PubMed:14871935). Does dot lead to compensation by increased expression of another chitin synthase genes (PubMed:12213927).</text>
</comment>
<comment type="similarity">
    <text evidence="13">In the N-terminal section; belongs to the TRAFAC class myosin-kinesin ATPase superfamily. Myosin family.</text>
</comment>
<comment type="similarity">
    <text evidence="13">In the C-terminal section; belongs to the chitin synthase family. Class V subfamily.</text>
</comment>
<organism>
    <name type="scientific">Exophiala dermatitidis</name>
    <name type="common">Black yeast-like fungus</name>
    <name type="synonym">Wangiella dermatitidis</name>
    <dbReference type="NCBI Taxonomy" id="5970"/>
    <lineage>
        <taxon>Eukaryota</taxon>
        <taxon>Fungi</taxon>
        <taxon>Dikarya</taxon>
        <taxon>Ascomycota</taxon>
        <taxon>Pezizomycotina</taxon>
        <taxon>Eurotiomycetes</taxon>
        <taxon>Chaetothyriomycetidae</taxon>
        <taxon>Chaetothyriales</taxon>
        <taxon>Herpotrichiellaceae</taxon>
        <taxon>Exophiala</taxon>
    </lineage>
</organism>
<protein>
    <recommendedName>
        <fullName evidence="12">Chitin synthase 5</fullName>
        <ecNumber evidence="10 11">2.4.1.16</ecNumber>
    </recommendedName>
    <alternativeName>
        <fullName evidence="13">Chitin-UDP acetyl-glucosaminyl transferase 5</fullName>
    </alternativeName>
    <alternativeName>
        <fullName evidence="12">Class-V chitin synthase 5</fullName>
    </alternativeName>
</protein>
<dbReference type="EC" id="2.4.1.16" evidence="10 11"/>
<dbReference type="EMBL" id="AF469116">
    <property type="protein sequence ID" value="AAL79830.2"/>
    <property type="molecule type" value="Genomic_DNA"/>
</dbReference>
<dbReference type="SMR" id="Q8TGV2"/>
<dbReference type="CAZy" id="GT2">
    <property type="family name" value="Glycosyltransferase Family 2"/>
</dbReference>
<dbReference type="VEuPathDB" id="FungiDB:HMPREF1120_08776"/>
<dbReference type="BRENDA" id="2.4.1.16">
    <property type="organism ID" value="6682"/>
</dbReference>
<dbReference type="PHI-base" id="PHI:390"/>
<dbReference type="GO" id="GO:0030428">
    <property type="term" value="C:cell septum"/>
    <property type="evidence" value="ECO:0007669"/>
    <property type="project" value="TreeGrafter"/>
</dbReference>
<dbReference type="GO" id="GO:0016459">
    <property type="term" value="C:myosin complex"/>
    <property type="evidence" value="ECO:0007669"/>
    <property type="project" value="UniProtKB-KW"/>
</dbReference>
<dbReference type="GO" id="GO:0005886">
    <property type="term" value="C:plasma membrane"/>
    <property type="evidence" value="ECO:0007669"/>
    <property type="project" value="UniProtKB-SubCell"/>
</dbReference>
<dbReference type="GO" id="GO:0003779">
    <property type="term" value="F:actin binding"/>
    <property type="evidence" value="ECO:0007669"/>
    <property type="project" value="UniProtKB-KW"/>
</dbReference>
<dbReference type="GO" id="GO:0005524">
    <property type="term" value="F:ATP binding"/>
    <property type="evidence" value="ECO:0007669"/>
    <property type="project" value="UniProtKB-KW"/>
</dbReference>
<dbReference type="GO" id="GO:0004100">
    <property type="term" value="F:chitin synthase activity"/>
    <property type="evidence" value="ECO:0007669"/>
    <property type="project" value="UniProtKB-EC"/>
</dbReference>
<dbReference type="GO" id="GO:0003774">
    <property type="term" value="F:cytoskeletal motor activity"/>
    <property type="evidence" value="ECO:0007669"/>
    <property type="project" value="InterPro"/>
</dbReference>
<dbReference type="GO" id="GO:0006031">
    <property type="term" value="P:chitin biosynthetic process"/>
    <property type="evidence" value="ECO:0007669"/>
    <property type="project" value="TreeGrafter"/>
</dbReference>
<dbReference type="GO" id="GO:0031505">
    <property type="term" value="P:fungal-type cell wall organization"/>
    <property type="evidence" value="ECO:0007669"/>
    <property type="project" value="TreeGrafter"/>
</dbReference>
<dbReference type="CDD" id="cd14879">
    <property type="entry name" value="MYSc_Myo17"/>
    <property type="match status" value="1"/>
</dbReference>
<dbReference type="FunFam" id="1.10.10.60:FF:000337">
    <property type="entry name" value="Chitin synthase 8"/>
    <property type="match status" value="1"/>
</dbReference>
<dbReference type="FunFam" id="1.10.10.820:FF:000012">
    <property type="entry name" value="Chitin synthase ChsE"/>
    <property type="match status" value="1"/>
</dbReference>
<dbReference type="FunFam" id="1.20.58.530:FF:000017">
    <property type="entry name" value="Chitin synthase ChsE"/>
    <property type="match status" value="1"/>
</dbReference>
<dbReference type="FunFam" id="3.10.120.10:FF:000019">
    <property type="entry name" value="Chitin synthase ChsE"/>
    <property type="match status" value="1"/>
</dbReference>
<dbReference type="Gene3D" id="1.10.10.820">
    <property type="match status" value="1"/>
</dbReference>
<dbReference type="Gene3D" id="1.20.58.530">
    <property type="match status" value="1"/>
</dbReference>
<dbReference type="Gene3D" id="3.10.120.10">
    <property type="entry name" value="Cytochrome b5-like heme/steroid binding domain"/>
    <property type="match status" value="1"/>
</dbReference>
<dbReference type="Gene3D" id="1.10.10.60">
    <property type="entry name" value="Homeodomain-like"/>
    <property type="match status" value="1"/>
</dbReference>
<dbReference type="Gene3D" id="3.40.850.10">
    <property type="entry name" value="Kinesin motor domain"/>
    <property type="match status" value="1"/>
</dbReference>
<dbReference type="Gene3D" id="1.20.120.720">
    <property type="entry name" value="Myosin VI head, motor domain, U50 subdomain"/>
    <property type="match status" value="1"/>
</dbReference>
<dbReference type="Gene3D" id="3.90.550.10">
    <property type="entry name" value="Spore Coat Polysaccharide Biosynthesis Protein SpsA, Chain A"/>
    <property type="match status" value="1"/>
</dbReference>
<dbReference type="InterPro" id="IPR004835">
    <property type="entry name" value="Chitin_synth"/>
</dbReference>
<dbReference type="InterPro" id="IPR001199">
    <property type="entry name" value="Cyt_B5-like_heme/steroid-bd"/>
</dbReference>
<dbReference type="InterPro" id="IPR036400">
    <property type="entry name" value="Cyt_B5-like_heme/steroid_sf"/>
</dbReference>
<dbReference type="InterPro" id="IPR014876">
    <property type="entry name" value="DEK_C"/>
</dbReference>
<dbReference type="InterPro" id="IPR036961">
    <property type="entry name" value="Kinesin_motor_dom_sf"/>
</dbReference>
<dbReference type="InterPro" id="IPR001609">
    <property type="entry name" value="Myosin_head_motor_dom-like"/>
</dbReference>
<dbReference type="InterPro" id="IPR036037">
    <property type="entry name" value="MYSc_Myo17"/>
</dbReference>
<dbReference type="InterPro" id="IPR029044">
    <property type="entry name" value="Nucleotide-diphossugar_trans"/>
</dbReference>
<dbReference type="InterPro" id="IPR027417">
    <property type="entry name" value="P-loop_NTPase"/>
</dbReference>
<dbReference type="PANTHER" id="PTHR22914">
    <property type="entry name" value="CHITIN SYNTHASE"/>
    <property type="match status" value="1"/>
</dbReference>
<dbReference type="PANTHER" id="PTHR22914:SF45">
    <property type="entry name" value="CHITIN SYNTHASE"/>
    <property type="match status" value="1"/>
</dbReference>
<dbReference type="Pfam" id="PF03142">
    <property type="entry name" value="Chitin_synth_2"/>
    <property type="match status" value="1"/>
</dbReference>
<dbReference type="Pfam" id="PF00173">
    <property type="entry name" value="Cyt-b5"/>
    <property type="match status" value="1"/>
</dbReference>
<dbReference type="Pfam" id="PF08766">
    <property type="entry name" value="DEK_C"/>
    <property type="match status" value="1"/>
</dbReference>
<dbReference type="Pfam" id="PF00063">
    <property type="entry name" value="Myosin_head"/>
    <property type="match status" value="1"/>
</dbReference>
<dbReference type="SMART" id="SM01117">
    <property type="entry name" value="Cyt-b5"/>
    <property type="match status" value="2"/>
</dbReference>
<dbReference type="SMART" id="SM00242">
    <property type="entry name" value="MYSc"/>
    <property type="match status" value="1"/>
</dbReference>
<dbReference type="SUPFAM" id="SSF55856">
    <property type="entry name" value="Cytochrome b5-like heme/steroid binding domain"/>
    <property type="match status" value="1"/>
</dbReference>
<dbReference type="SUPFAM" id="SSF109715">
    <property type="entry name" value="DEK C-terminal domain"/>
    <property type="match status" value="1"/>
</dbReference>
<dbReference type="SUPFAM" id="SSF53448">
    <property type="entry name" value="Nucleotide-diphospho-sugar transferases"/>
    <property type="match status" value="1"/>
</dbReference>
<dbReference type="SUPFAM" id="SSF52540">
    <property type="entry name" value="P-loop containing nucleoside triphosphate hydrolases"/>
    <property type="match status" value="1"/>
</dbReference>
<dbReference type="PROSITE" id="PS50255">
    <property type="entry name" value="CYTOCHROME_B5_2"/>
    <property type="match status" value="1"/>
</dbReference>
<dbReference type="PROSITE" id="PS51998">
    <property type="entry name" value="DEK_C"/>
    <property type="match status" value="1"/>
</dbReference>
<dbReference type="PROSITE" id="PS51456">
    <property type="entry name" value="MYOSIN_MOTOR"/>
    <property type="match status" value="1"/>
</dbReference>